<protein>
    <recommendedName>
        <fullName evidence="1">4-hydroxybenzoate octaprenyltransferase</fullName>
        <ecNumber evidence="1">2.5.1.39</ecNumber>
    </recommendedName>
    <alternativeName>
        <fullName evidence="1">4-HB polyprenyltransferase</fullName>
    </alternativeName>
</protein>
<sequence>MERSVTAGKWLAYCRLMRIDKPIGSLLLLWPTLWALWLAGGGAPAPWTLFVFVAGVFLMRAAGCVINDYADRHFDGHVKRTASRPLPSGEVSEQSAKVLFVVLVLLAFGLVLTLNTMTIWLSVAGLGLAWVYPFMKRVSHLPQFVLGAAFGWSIPMAYAAVSESLPATCWMMFLAYICWTVAYDTQYAMVDRDDDLKIGVKSTAILFGRFDNLIIGLLQFSMLALLLILGTMTGLGMPYYISLLVAGGMFIYQQILTAGRERDACFKAFHNNKYAGMAIFIGVLFGL</sequence>
<comment type="function">
    <text evidence="1">Catalyzes the prenylation of para-hydroxybenzoate (PHB) with an all-trans polyprenyl group. Mediates the second step in the final reaction sequence of ubiquinone-8 (UQ-8) biosynthesis, which is the condensation of the polyisoprenoid side chain with PHB, generating the first membrane-bound Q intermediate 3-octaprenyl-4-hydroxybenzoate.</text>
</comment>
<comment type="catalytic activity">
    <reaction evidence="1">
        <text>all-trans-octaprenyl diphosphate + 4-hydroxybenzoate = 4-hydroxy-3-(all-trans-octaprenyl)benzoate + diphosphate</text>
        <dbReference type="Rhea" id="RHEA:27782"/>
        <dbReference type="ChEBI" id="CHEBI:1617"/>
        <dbReference type="ChEBI" id="CHEBI:17879"/>
        <dbReference type="ChEBI" id="CHEBI:33019"/>
        <dbReference type="ChEBI" id="CHEBI:57711"/>
        <dbReference type="EC" id="2.5.1.39"/>
    </reaction>
</comment>
<comment type="cofactor">
    <cofactor evidence="1">
        <name>Mg(2+)</name>
        <dbReference type="ChEBI" id="CHEBI:18420"/>
    </cofactor>
</comment>
<comment type="pathway">
    <text evidence="1">Cofactor biosynthesis; ubiquinone biosynthesis.</text>
</comment>
<comment type="subcellular location">
    <subcellularLocation>
        <location evidence="1">Cell inner membrane</location>
        <topology evidence="1">Multi-pass membrane protein</topology>
    </subcellularLocation>
</comment>
<comment type="similarity">
    <text evidence="1">Belongs to the UbiA prenyltransferase family.</text>
</comment>
<evidence type="ECO:0000255" key="1">
    <source>
        <dbReference type="HAMAP-Rule" id="MF_01635"/>
    </source>
</evidence>
<gene>
    <name evidence="1" type="primary">ubiA</name>
    <name type="ordered locus">PC1_0511</name>
</gene>
<organism>
    <name type="scientific">Pectobacterium carotovorum subsp. carotovorum (strain PC1)</name>
    <dbReference type="NCBI Taxonomy" id="561230"/>
    <lineage>
        <taxon>Bacteria</taxon>
        <taxon>Pseudomonadati</taxon>
        <taxon>Pseudomonadota</taxon>
        <taxon>Gammaproteobacteria</taxon>
        <taxon>Enterobacterales</taxon>
        <taxon>Pectobacteriaceae</taxon>
        <taxon>Pectobacterium</taxon>
    </lineage>
</organism>
<dbReference type="EC" id="2.5.1.39" evidence="1"/>
<dbReference type="EMBL" id="CP001657">
    <property type="protein sequence ID" value="ACT11566.1"/>
    <property type="molecule type" value="Genomic_DNA"/>
</dbReference>
<dbReference type="RefSeq" id="WP_012773219.1">
    <property type="nucleotide sequence ID" value="NC_012917.1"/>
</dbReference>
<dbReference type="SMR" id="C6DKC9"/>
<dbReference type="STRING" id="561230.PC1_0511"/>
<dbReference type="KEGG" id="pct:PC1_0511"/>
<dbReference type="eggNOG" id="COG0382">
    <property type="taxonomic scope" value="Bacteria"/>
</dbReference>
<dbReference type="HOGENOM" id="CLU_034879_1_0_6"/>
<dbReference type="OrthoDB" id="9782418at2"/>
<dbReference type="UniPathway" id="UPA00232"/>
<dbReference type="Proteomes" id="UP000002736">
    <property type="component" value="Chromosome"/>
</dbReference>
<dbReference type="GO" id="GO:0005886">
    <property type="term" value="C:plasma membrane"/>
    <property type="evidence" value="ECO:0007669"/>
    <property type="project" value="UniProtKB-SubCell"/>
</dbReference>
<dbReference type="GO" id="GO:0008412">
    <property type="term" value="F:4-hydroxybenzoate polyprenyltransferase activity"/>
    <property type="evidence" value="ECO:0007669"/>
    <property type="project" value="UniProtKB-UniRule"/>
</dbReference>
<dbReference type="GO" id="GO:0006744">
    <property type="term" value="P:ubiquinone biosynthetic process"/>
    <property type="evidence" value="ECO:0007669"/>
    <property type="project" value="UniProtKB-UniRule"/>
</dbReference>
<dbReference type="CDD" id="cd13959">
    <property type="entry name" value="PT_UbiA_COQ2"/>
    <property type="match status" value="1"/>
</dbReference>
<dbReference type="FunFam" id="1.10.357.140:FF:000002">
    <property type="entry name" value="4-hydroxybenzoate octaprenyltransferase"/>
    <property type="match status" value="1"/>
</dbReference>
<dbReference type="FunFam" id="1.20.120.1780:FF:000001">
    <property type="entry name" value="4-hydroxybenzoate octaprenyltransferase"/>
    <property type="match status" value="1"/>
</dbReference>
<dbReference type="Gene3D" id="1.10.357.140">
    <property type="entry name" value="UbiA prenyltransferase"/>
    <property type="match status" value="1"/>
</dbReference>
<dbReference type="Gene3D" id="1.20.120.1780">
    <property type="entry name" value="UbiA prenyltransferase"/>
    <property type="match status" value="1"/>
</dbReference>
<dbReference type="HAMAP" id="MF_01635">
    <property type="entry name" value="UbiA"/>
    <property type="match status" value="1"/>
</dbReference>
<dbReference type="InterPro" id="IPR006370">
    <property type="entry name" value="HB_polyprenyltransferase-like"/>
</dbReference>
<dbReference type="InterPro" id="IPR039653">
    <property type="entry name" value="Prenyltransferase"/>
</dbReference>
<dbReference type="InterPro" id="IPR000537">
    <property type="entry name" value="UbiA_prenyltransferase"/>
</dbReference>
<dbReference type="InterPro" id="IPR030470">
    <property type="entry name" value="UbiA_prenylTrfase_CS"/>
</dbReference>
<dbReference type="InterPro" id="IPR044878">
    <property type="entry name" value="UbiA_sf"/>
</dbReference>
<dbReference type="NCBIfam" id="TIGR01474">
    <property type="entry name" value="ubiA_proteo"/>
    <property type="match status" value="1"/>
</dbReference>
<dbReference type="PANTHER" id="PTHR11048:SF28">
    <property type="entry name" value="4-HYDROXYBENZOATE POLYPRENYLTRANSFERASE, MITOCHONDRIAL"/>
    <property type="match status" value="1"/>
</dbReference>
<dbReference type="PANTHER" id="PTHR11048">
    <property type="entry name" value="PRENYLTRANSFERASES"/>
    <property type="match status" value="1"/>
</dbReference>
<dbReference type="Pfam" id="PF01040">
    <property type="entry name" value="UbiA"/>
    <property type="match status" value="1"/>
</dbReference>
<dbReference type="PROSITE" id="PS00943">
    <property type="entry name" value="UBIA"/>
    <property type="match status" value="1"/>
</dbReference>
<keyword id="KW-0997">Cell inner membrane</keyword>
<keyword id="KW-1003">Cell membrane</keyword>
<keyword id="KW-0460">Magnesium</keyword>
<keyword id="KW-0472">Membrane</keyword>
<keyword id="KW-0808">Transferase</keyword>
<keyword id="KW-0812">Transmembrane</keyword>
<keyword id="KW-1133">Transmembrane helix</keyword>
<keyword id="KW-0831">Ubiquinone biosynthesis</keyword>
<name>UBIA_PECCP</name>
<proteinExistence type="inferred from homology"/>
<reference key="1">
    <citation type="submission" date="2009-07" db="EMBL/GenBank/DDBJ databases">
        <title>Complete sequence of Pectobacterium carotovorum subsp. carotovorum PC1.</title>
        <authorList>
            <consortium name="US DOE Joint Genome Institute"/>
            <person name="Lucas S."/>
            <person name="Copeland A."/>
            <person name="Lapidus A."/>
            <person name="Glavina del Rio T."/>
            <person name="Tice H."/>
            <person name="Bruce D."/>
            <person name="Goodwin L."/>
            <person name="Pitluck S."/>
            <person name="Munk A.C."/>
            <person name="Brettin T."/>
            <person name="Detter J.C."/>
            <person name="Han C."/>
            <person name="Tapia R."/>
            <person name="Larimer F."/>
            <person name="Land M."/>
            <person name="Hauser L."/>
            <person name="Kyrpides N."/>
            <person name="Mikhailova N."/>
            <person name="Balakrishnan V."/>
            <person name="Glasner J."/>
            <person name="Perna N.T."/>
        </authorList>
    </citation>
    <scope>NUCLEOTIDE SEQUENCE [LARGE SCALE GENOMIC DNA]</scope>
    <source>
        <strain>PC1</strain>
    </source>
</reference>
<feature type="chain" id="PRO_1000215804" description="4-hydroxybenzoate octaprenyltransferase">
    <location>
        <begin position="1"/>
        <end position="287"/>
    </location>
</feature>
<feature type="transmembrane region" description="Helical" evidence="1">
    <location>
        <begin position="23"/>
        <end position="40"/>
    </location>
</feature>
<feature type="transmembrane region" description="Helical" evidence="1">
    <location>
        <begin position="99"/>
        <end position="119"/>
    </location>
</feature>
<feature type="transmembrane region" description="Helical" evidence="1">
    <location>
        <begin position="141"/>
        <end position="161"/>
    </location>
</feature>
<feature type="transmembrane region" description="Helical" evidence="1">
    <location>
        <begin position="163"/>
        <end position="183"/>
    </location>
</feature>
<feature type="transmembrane region" description="Helical" evidence="1">
    <location>
        <begin position="213"/>
        <end position="233"/>
    </location>
</feature>
<feature type="transmembrane region" description="Helical" evidence="1">
    <location>
        <begin position="235"/>
        <end position="255"/>
    </location>
</feature>
<feature type="transmembrane region" description="Helical" evidence="1">
    <location>
        <begin position="266"/>
        <end position="286"/>
    </location>
</feature>
<accession>C6DKC9</accession>